<protein>
    <recommendedName>
        <fullName evidence="1">NAD-capped RNA hydrolase NudC</fullName>
        <shortName evidence="1">DeNADding enzyme NudC</shortName>
        <ecNumber evidence="1">3.6.1.-</ecNumber>
    </recommendedName>
    <alternativeName>
        <fullName evidence="1">NADH pyrophosphatase</fullName>
        <ecNumber evidence="1">3.6.1.22</ecNumber>
    </alternativeName>
</protein>
<comment type="function">
    <text evidence="1">mRNA decapping enzyme that specifically removes the nicotinamide adenine dinucleotide (NAD) cap from a subset of mRNAs by hydrolyzing the diphosphate linkage to produce nicotinamide mononucleotide (NMN) and 5' monophosphate mRNA. The NAD-cap is present at the 5'-end of some mRNAs and stabilizes RNA against 5'-processing. Has preference for mRNAs with a 5'-end purine. Catalyzes the hydrolysis of a broad range of dinucleotide pyrophosphates.</text>
</comment>
<comment type="catalytic activity">
    <reaction evidence="1">
        <text>a 5'-end NAD(+)-phospho-ribonucleoside in mRNA + H2O = a 5'-end phospho-adenosine-phospho-ribonucleoside in mRNA + beta-nicotinamide D-ribonucleotide + 2 H(+)</text>
        <dbReference type="Rhea" id="RHEA:60876"/>
        <dbReference type="Rhea" id="RHEA-COMP:15698"/>
        <dbReference type="Rhea" id="RHEA-COMP:15719"/>
        <dbReference type="ChEBI" id="CHEBI:14649"/>
        <dbReference type="ChEBI" id="CHEBI:15377"/>
        <dbReference type="ChEBI" id="CHEBI:15378"/>
        <dbReference type="ChEBI" id="CHEBI:144029"/>
        <dbReference type="ChEBI" id="CHEBI:144051"/>
    </reaction>
    <physiologicalReaction direction="left-to-right" evidence="1">
        <dbReference type="Rhea" id="RHEA:60877"/>
    </physiologicalReaction>
</comment>
<comment type="catalytic activity">
    <reaction evidence="1">
        <text>NAD(+) + H2O = beta-nicotinamide D-ribonucleotide + AMP + 2 H(+)</text>
        <dbReference type="Rhea" id="RHEA:11800"/>
        <dbReference type="ChEBI" id="CHEBI:14649"/>
        <dbReference type="ChEBI" id="CHEBI:15377"/>
        <dbReference type="ChEBI" id="CHEBI:15378"/>
        <dbReference type="ChEBI" id="CHEBI:57540"/>
        <dbReference type="ChEBI" id="CHEBI:456215"/>
        <dbReference type="EC" id="3.6.1.22"/>
    </reaction>
</comment>
<comment type="catalytic activity">
    <reaction evidence="1">
        <text>NADH + H2O = reduced beta-nicotinamide D-ribonucleotide + AMP + 2 H(+)</text>
        <dbReference type="Rhea" id="RHEA:48868"/>
        <dbReference type="ChEBI" id="CHEBI:15377"/>
        <dbReference type="ChEBI" id="CHEBI:15378"/>
        <dbReference type="ChEBI" id="CHEBI:57945"/>
        <dbReference type="ChEBI" id="CHEBI:90832"/>
        <dbReference type="ChEBI" id="CHEBI:456215"/>
        <dbReference type="EC" id="3.6.1.22"/>
    </reaction>
</comment>
<comment type="cofactor">
    <cofactor evidence="1">
        <name>Mg(2+)</name>
        <dbReference type="ChEBI" id="CHEBI:18420"/>
    </cofactor>
    <cofactor evidence="1">
        <name>Mn(2+)</name>
        <dbReference type="ChEBI" id="CHEBI:29035"/>
    </cofactor>
    <text evidence="1">Divalent metal cations. Mg(2+) or Mn(2+).</text>
</comment>
<comment type="cofactor">
    <cofactor evidence="1">
        <name>Zn(2+)</name>
        <dbReference type="ChEBI" id="CHEBI:29105"/>
    </cofactor>
    <text evidence="1">Binds 1 zinc ion per subunit.</text>
</comment>
<comment type="subunit">
    <text evidence="1">Homodimer.</text>
</comment>
<comment type="similarity">
    <text evidence="1">Belongs to the Nudix hydrolase family. NudC subfamily.</text>
</comment>
<evidence type="ECO:0000255" key="1">
    <source>
        <dbReference type="HAMAP-Rule" id="MF_00297"/>
    </source>
</evidence>
<dbReference type="EC" id="3.6.1.-" evidence="1"/>
<dbReference type="EC" id="3.6.1.22" evidence="1"/>
<dbReference type="EMBL" id="CP001138">
    <property type="protein sequence ID" value="ACH50465.1"/>
    <property type="molecule type" value="Genomic_DNA"/>
</dbReference>
<dbReference type="RefSeq" id="WP_000373955.1">
    <property type="nucleotide sequence ID" value="NC_011149.1"/>
</dbReference>
<dbReference type="SMR" id="B5F1H9"/>
<dbReference type="KEGG" id="sea:SeAg_B4410"/>
<dbReference type="HOGENOM" id="CLU_037162_0_1_6"/>
<dbReference type="Proteomes" id="UP000008819">
    <property type="component" value="Chromosome"/>
</dbReference>
<dbReference type="GO" id="GO:0005829">
    <property type="term" value="C:cytosol"/>
    <property type="evidence" value="ECO:0007669"/>
    <property type="project" value="TreeGrafter"/>
</dbReference>
<dbReference type="GO" id="GO:0000287">
    <property type="term" value="F:magnesium ion binding"/>
    <property type="evidence" value="ECO:0007669"/>
    <property type="project" value="UniProtKB-UniRule"/>
</dbReference>
<dbReference type="GO" id="GO:0030145">
    <property type="term" value="F:manganese ion binding"/>
    <property type="evidence" value="ECO:0007669"/>
    <property type="project" value="UniProtKB-UniRule"/>
</dbReference>
<dbReference type="GO" id="GO:0000210">
    <property type="term" value="F:NAD+ diphosphatase activity"/>
    <property type="evidence" value="ECO:0007669"/>
    <property type="project" value="UniProtKB-UniRule"/>
</dbReference>
<dbReference type="GO" id="GO:0035529">
    <property type="term" value="F:NADH pyrophosphatase activity"/>
    <property type="evidence" value="ECO:0007669"/>
    <property type="project" value="TreeGrafter"/>
</dbReference>
<dbReference type="GO" id="GO:0110153">
    <property type="term" value="F:RNA NAD-cap (NMN-forming) hydrolase activity"/>
    <property type="evidence" value="ECO:0007669"/>
    <property type="project" value="RHEA"/>
</dbReference>
<dbReference type="GO" id="GO:0008270">
    <property type="term" value="F:zinc ion binding"/>
    <property type="evidence" value="ECO:0007669"/>
    <property type="project" value="UniProtKB-UniRule"/>
</dbReference>
<dbReference type="GO" id="GO:0019677">
    <property type="term" value="P:NAD catabolic process"/>
    <property type="evidence" value="ECO:0007669"/>
    <property type="project" value="TreeGrafter"/>
</dbReference>
<dbReference type="GO" id="GO:0006734">
    <property type="term" value="P:NADH metabolic process"/>
    <property type="evidence" value="ECO:0007669"/>
    <property type="project" value="TreeGrafter"/>
</dbReference>
<dbReference type="GO" id="GO:0006742">
    <property type="term" value="P:NADP catabolic process"/>
    <property type="evidence" value="ECO:0007669"/>
    <property type="project" value="TreeGrafter"/>
</dbReference>
<dbReference type="CDD" id="cd03429">
    <property type="entry name" value="NUDIX_NADH_pyrophosphatase_Nudt13"/>
    <property type="match status" value="1"/>
</dbReference>
<dbReference type="FunFam" id="3.90.79.10:FF:000004">
    <property type="entry name" value="NADH pyrophosphatase"/>
    <property type="match status" value="1"/>
</dbReference>
<dbReference type="FunFam" id="3.90.79.20:FF:000001">
    <property type="entry name" value="NADH pyrophosphatase"/>
    <property type="match status" value="1"/>
</dbReference>
<dbReference type="Gene3D" id="3.90.79.20">
    <property type="match status" value="1"/>
</dbReference>
<dbReference type="Gene3D" id="3.90.79.10">
    <property type="entry name" value="Nucleoside Triphosphate Pyrophosphohydrolase"/>
    <property type="match status" value="1"/>
</dbReference>
<dbReference type="HAMAP" id="MF_00297">
    <property type="entry name" value="Nudix_NudC"/>
    <property type="match status" value="1"/>
</dbReference>
<dbReference type="InterPro" id="IPR050241">
    <property type="entry name" value="NAD-cap_RNA_hydrolase_NudC"/>
</dbReference>
<dbReference type="InterPro" id="IPR049734">
    <property type="entry name" value="NudC-like_C"/>
</dbReference>
<dbReference type="InterPro" id="IPR015797">
    <property type="entry name" value="NUDIX_hydrolase-like_dom_sf"/>
</dbReference>
<dbReference type="InterPro" id="IPR020084">
    <property type="entry name" value="NUDIX_hydrolase_CS"/>
</dbReference>
<dbReference type="InterPro" id="IPR000086">
    <property type="entry name" value="NUDIX_hydrolase_dom"/>
</dbReference>
<dbReference type="InterPro" id="IPR022925">
    <property type="entry name" value="RNA_Hydrolase_NudC"/>
</dbReference>
<dbReference type="InterPro" id="IPR015376">
    <property type="entry name" value="Znr_NADH_PPase"/>
</dbReference>
<dbReference type="NCBIfam" id="NF001299">
    <property type="entry name" value="PRK00241.1"/>
    <property type="match status" value="1"/>
</dbReference>
<dbReference type="PANTHER" id="PTHR42904:SF6">
    <property type="entry name" value="NAD-CAPPED RNA HYDROLASE NUDT12"/>
    <property type="match status" value="1"/>
</dbReference>
<dbReference type="PANTHER" id="PTHR42904">
    <property type="entry name" value="NUDIX HYDROLASE, NUDC SUBFAMILY"/>
    <property type="match status" value="1"/>
</dbReference>
<dbReference type="Pfam" id="PF00293">
    <property type="entry name" value="NUDIX"/>
    <property type="match status" value="1"/>
</dbReference>
<dbReference type="Pfam" id="PF09297">
    <property type="entry name" value="Zn_ribbon_NUD"/>
    <property type="match status" value="1"/>
</dbReference>
<dbReference type="SUPFAM" id="SSF55811">
    <property type="entry name" value="Nudix"/>
    <property type="match status" value="2"/>
</dbReference>
<dbReference type="PROSITE" id="PS51462">
    <property type="entry name" value="NUDIX"/>
    <property type="match status" value="1"/>
</dbReference>
<dbReference type="PROSITE" id="PS00893">
    <property type="entry name" value="NUDIX_BOX"/>
    <property type="match status" value="1"/>
</dbReference>
<sequence length="257" mass="29621">MDRIIEKLESGWWIVSHEQKLWLPYGELPHGLAANFDLVGQRALRIGEWQGEPVWLVLQHRRHDMGSVRQVIDQDAGLFQLAGRGVQLAEFYRSHKFCGYCGHPMHPSKTEWAMLCSHCRERYYPQIAPCIIVAIRREDSILLAQHVRHRNGVHTVLAGFVEVGETLEQAVAREVMEESGIKVKNLRYITSQPWPFPQSLMTAFMAEYDSGEIVIDPKELLEANWYRYDDLPLLPPPGTVARRLIEDTVAMCRAEYD</sequence>
<feature type="chain" id="PRO_1000115246" description="NAD-capped RNA hydrolase NudC">
    <location>
        <begin position="1"/>
        <end position="257"/>
    </location>
</feature>
<feature type="domain" description="Nudix hydrolase" evidence="1">
    <location>
        <begin position="125"/>
        <end position="248"/>
    </location>
</feature>
<feature type="short sequence motif" description="Nudix box" evidence="1">
    <location>
        <begin position="159"/>
        <end position="180"/>
    </location>
</feature>
<feature type="binding site" evidence="1">
    <location>
        <position position="69"/>
    </location>
    <ligand>
        <name>substrate</name>
    </ligand>
</feature>
<feature type="binding site" evidence="1">
    <location>
        <position position="98"/>
    </location>
    <ligand>
        <name>Zn(2+)</name>
        <dbReference type="ChEBI" id="CHEBI:29105"/>
    </ligand>
</feature>
<feature type="binding site" evidence="1">
    <location>
        <position position="101"/>
    </location>
    <ligand>
        <name>Zn(2+)</name>
        <dbReference type="ChEBI" id="CHEBI:29105"/>
    </ligand>
</feature>
<feature type="binding site" evidence="1">
    <location>
        <position position="111"/>
    </location>
    <ligand>
        <name>substrate</name>
    </ligand>
</feature>
<feature type="binding site" evidence="1">
    <location>
        <position position="116"/>
    </location>
    <ligand>
        <name>Zn(2+)</name>
        <dbReference type="ChEBI" id="CHEBI:29105"/>
    </ligand>
</feature>
<feature type="binding site" evidence="1">
    <location>
        <position position="119"/>
    </location>
    <ligand>
        <name>Zn(2+)</name>
        <dbReference type="ChEBI" id="CHEBI:29105"/>
    </ligand>
</feature>
<feature type="binding site" evidence="1">
    <location>
        <position position="124"/>
    </location>
    <ligand>
        <name>substrate</name>
    </ligand>
</feature>
<feature type="binding site" evidence="1">
    <location>
        <position position="158"/>
    </location>
    <ligand>
        <name>a divalent metal cation</name>
        <dbReference type="ChEBI" id="CHEBI:60240"/>
        <label>1</label>
    </ligand>
</feature>
<feature type="binding site" evidence="1">
    <location>
        <position position="174"/>
    </location>
    <ligand>
        <name>a divalent metal cation</name>
        <dbReference type="ChEBI" id="CHEBI:60240"/>
        <label>2</label>
    </ligand>
</feature>
<feature type="binding site" evidence="1">
    <location>
        <position position="174"/>
    </location>
    <ligand>
        <name>a divalent metal cation</name>
        <dbReference type="ChEBI" id="CHEBI:60240"/>
        <label>3</label>
    </ligand>
</feature>
<feature type="binding site" evidence="1">
    <location>
        <position position="178"/>
    </location>
    <ligand>
        <name>a divalent metal cation</name>
        <dbReference type="ChEBI" id="CHEBI:60240"/>
        <label>1</label>
    </ligand>
</feature>
<feature type="binding site" evidence="1">
    <location>
        <position position="178"/>
    </location>
    <ligand>
        <name>a divalent metal cation</name>
        <dbReference type="ChEBI" id="CHEBI:60240"/>
        <label>3</label>
    </ligand>
</feature>
<feature type="binding site" evidence="1">
    <location>
        <begin position="192"/>
        <end position="199"/>
    </location>
    <ligand>
        <name>substrate</name>
    </ligand>
</feature>
<feature type="binding site" evidence="1">
    <location>
        <position position="219"/>
    </location>
    <ligand>
        <name>a divalent metal cation</name>
        <dbReference type="ChEBI" id="CHEBI:60240"/>
        <label>1</label>
    </ligand>
</feature>
<feature type="binding site" evidence="1">
    <location>
        <position position="219"/>
    </location>
    <ligand>
        <name>a divalent metal cation</name>
        <dbReference type="ChEBI" id="CHEBI:60240"/>
        <label>3</label>
    </ligand>
</feature>
<feature type="binding site" evidence="1">
    <location>
        <position position="241"/>
    </location>
    <ligand>
        <name>substrate</name>
    </ligand>
</feature>
<gene>
    <name evidence="1" type="primary">nudC</name>
    <name type="ordered locus">SeAg_B4410</name>
</gene>
<name>NUDC_SALA4</name>
<proteinExistence type="inferred from homology"/>
<keyword id="KW-0378">Hydrolase</keyword>
<keyword id="KW-0460">Magnesium</keyword>
<keyword id="KW-0464">Manganese</keyword>
<keyword id="KW-0479">Metal-binding</keyword>
<keyword id="KW-0520">NAD</keyword>
<keyword id="KW-0862">Zinc</keyword>
<organism>
    <name type="scientific">Salmonella agona (strain SL483)</name>
    <dbReference type="NCBI Taxonomy" id="454166"/>
    <lineage>
        <taxon>Bacteria</taxon>
        <taxon>Pseudomonadati</taxon>
        <taxon>Pseudomonadota</taxon>
        <taxon>Gammaproteobacteria</taxon>
        <taxon>Enterobacterales</taxon>
        <taxon>Enterobacteriaceae</taxon>
        <taxon>Salmonella</taxon>
    </lineage>
</organism>
<accession>B5F1H9</accession>
<reference key="1">
    <citation type="journal article" date="2011" name="J. Bacteriol.">
        <title>Comparative genomics of 28 Salmonella enterica isolates: evidence for CRISPR-mediated adaptive sublineage evolution.</title>
        <authorList>
            <person name="Fricke W.F."/>
            <person name="Mammel M.K."/>
            <person name="McDermott P.F."/>
            <person name="Tartera C."/>
            <person name="White D.G."/>
            <person name="Leclerc J.E."/>
            <person name="Ravel J."/>
            <person name="Cebula T.A."/>
        </authorList>
    </citation>
    <scope>NUCLEOTIDE SEQUENCE [LARGE SCALE GENOMIC DNA]</scope>
    <source>
        <strain>SL483</strain>
    </source>
</reference>